<dbReference type="EMBL" id="AB022219">
    <property type="protein sequence ID" value="BAB02063.1"/>
    <property type="molecule type" value="Genomic_DNA"/>
</dbReference>
<dbReference type="EMBL" id="CP002686">
    <property type="protein sequence ID" value="AEE75995.1"/>
    <property type="molecule type" value="Genomic_DNA"/>
</dbReference>
<dbReference type="EMBL" id="AY087962">
    <property type="protein sequence ID" value="AAM65509.1"/>
    <property type="molecule type" value="mRNA"/>
</dbReference>
<dbReference type="EMBL" id="AK117783">
    <property type="protein sequence ID" value="BAC42430.1"/>
    <property type="status" value="ALT_INIT"/>
    <property type="molecule type" value="mRNA"/>
</dbReference>
<dbReference type="RefSeq" id="NP_566586.1">
    <property type="nucleotide sequence ID" value="NM_112652.3"/>
</dbReference>
<dbReference type="FunCoup" id="Q9LUM6">
    <property type="interactions" value="10"/>
</dbReference>
<dbReference type="STRING" id="3702.Q9LUM6"/>
<dbReference type="iPTMnet" id="Q9LUM6"/>
<dbReference type="PaxDb" id="3702-AT3G17710.1"/>
<dbReference type="ProteomicsDB" id="230645"/>
<dbReference type="EnsemblPlants" id="AT3G17710.1">
    <property type="protein sequence ID" value="AT3G17710.1"/>
    <property type="gene ID" value="AT3G17710"/>
</dbReference>
<dbReference type="GeneID" id="821038"/>
<dbReference type="Gramene" id="AT3G17710.1">
    <property type="protein sequence ID" value="AT3G17710.1"/>
    <property type="gene ID" value="AT3G17710"/>
</dbReference>
<dbReference type="KEGG" id="ath:AT3G17710"/>
<dbReference type="Araport" id="AT3G17710"/>
<dbReference type="TAIR" id="AT3G17710"/>
<dbReference type="HOGENOM" id="CLU_034692_2_1_1"/>
<dbReference type="InParanoid" id="Q9LUM6"/>
<dbReference type="OMA" id="AEVVWIN"/>
<dbReference type="PhylomeDB" id="Q9LUM6"/>
<dbReference type="PRO" id="PR:Q9LUM6"/>
<dbReference type="Proteomes" id="UP000006548">
    <property type="component" value="Chromosome 3"/>
</dbReference>
<dbReference type="ExpressionAtlas" id="Q9LUM6">
    <property type="expression patterns" value="baseline and differential"/>
</dbReference>
<dbReference type="CDD" id="cd22157">
    <property type="entry name" value="F-box_AtFBW1-like"/>
    <property type="match status" value="1"/>
</dbReference>
<dbReference type="Gene3D" id="1.20.1280.50">
    <property type="match status" value="1"/>
</dbReference>
<dbReference type="InterPro" id="IPR050233">
    <property type="entry name" value="A_thaliana_F-box"/>
</dbReference>
<dbReference type="InterPro" id="IPR006527">
    <property type="entry name" value="F-box-assoc_dom_typ1"/>
</dbReference>
<dbReference type="InterPro" id="IPR017451">
    <property type="entry name" value="F-box-assoc_interact_dom"/>
</dbReference>
<dbReference type="InterPro" id="IPR036047">
    <property type="entry name" value="F-box-like_dom_sf"/>
</dbReference>
<dbReference type="InterPro" id="IPR001810">
    <property type="entry name" value="F-box_dom"/>
</dbReference>
<dbReference type="NCBIfam" id="TIGR01640">
    <property type="entry name" value="F_box_assoc_1"/>
    <property type="match status" value="1"/>
</dbReference>
<dbReference type="PANTHER" id="PTHR47993:SF280">
    <property type="entry name" value="F-BOX DOMAIN-CONTAINING PROTEIN"/>
    <property type="match status" value="1"/>
</dbReference>
<dbReference type="PANTHER" id="PTHR47993">
    <property type="entry name" value="OS09G0372900 PROTEIN-RELATED"/>
    <property type="match status" value="1"/>
</dbReference>
<dbReference type="Pfam" id="PF00646">
    <property type="entry name" value="F-box"/>
    <property type="match status" value="1"/>
</dbReference>
<dbReference type="Pfam" id="PF07734">
    <property type="entry name" value="FBA_1"/>
    <property type="match status" value="1"/>
</dbReference>
<dbReference type="SMART" id="SM00256">
    <property type="entry name" value="FBOX"/>
    <property type="match status" value="1"/>
</dbReference>
<dbReference type="SUPFAM" id="SSF81383">
    <property type="entry name" value="F-box domain"/>
    <property type="match status" value="1"/>
</dbReference>
<dbReference type="PROSITE" id="PS50181">
    <property type="entry name" value="FBOX"/>
    <property type="match status" value="1"/>
</dbReference>
<proteinExistence type="evidence at transcript level"/>
<keyword id="KW-1185">Reference proteome</keyword>
<sequence length="368" mass="43421">MASVKLPWDLEEEILSRLPPRSLVRFRTVCKHWNGLFSDKRFVKKHLVRARPQFIFLTESKKMYSIEIDLGGTIEVREVPYDFHCQPMKKNFTTIMACDGLLFRDFWKQGVAVWNPWLRQVGWIEYEDKGFRFCGVGYDSCKPDKCYKILGYFNCTRRLSDSLQEGYYQAAIYECASQAFKFIDTPNPFNLWPNKDPLSVNGNLYWLAHNHPETLEYFIETFDFSMEIFKPFCLLPCRKDFGSNELVLAVFKEDRFSLLKQCFETTKIEIWVTKMKIDREEEVVWIKFMTLPTTNLPNLDDTYCCSSYFIFDKTIIMCCGDYKTGATCIYMVRGDMFKKIQINSGIFQFSYCVYLPNLISVPFESHQV</sequence>
<gene>
    <name type="ordered locus">At3g17710</name>
    <name type="ORF">MKP6.29</name>
</gene>
<evidence type="ECO:0000255" key="1">
    <source>
        <dbReference type="PROSITE-ProRule" id="PRU00080"/>
    </source>
</evidence>
<evidence type="ECO:0000305" key="2"/>
<feature type="chain" id="PRO_0000283427" description="F-box protein At3g17710">
    <location>
        <begin position="1"/>
        <end position="368"/>
    </location>
</feature>
<feature type="domain" description="F-box" evidence="1">
    <location>
        <begin position="1"/>
        <end position="46"/>
    </location>
</feature>
<feature type="sequence conflict" description="In Ref. 3; AAM65509." evidence="2" ref="3">
    <original>D</original>
    <variation>V</variation>
    <location>
        <position position="39"/>
    </location>
</feature>
<feature type="sequence conflict" description="In Ref. 4; BAC42430." evidence="2" ref="4">
    <original>E</original>
    <variation>G</variation>
    <location>
        <position position="125"/>
    </location>
</feature>
<feature type="sequence conflict" description="In Ref. 4; BAC42430." evidence="2" ref="4">
    <original>N</original>
    <variation>D</variation>
    <location>
        <position position="187"/>
    </location>
</feature>
<feature type="sequence conflict" description="In Ref. 3; AAM65509." evidence="2" ref="3">
    <original>C</original>
    <variation>R</variation>
    <location>
        <position position="305"/>
    </location>
</feature>
<name>FB157_ARATH</name>
<reference key="1">
    <citation type="journal article" date="2000" name="DNA Res.">
        <title>Structural analysis of Arabidopsis thaliana chromosome 3. I. Sequence features of the regions of 4,504,864 bp covered by sixty P1 and TAC clones.</title>
        <authorList>
            <person name="Sato S."/>
            <person name="Nakamura Y."/>
            <person name="Kaneko T."/>
            <person name="Katoh T."/>
            <person name="Asamizu E."/>
            <person name="Tabata S."/>
        </authorList>
    </citation>
    <scope>NUCLEOTIDE SEQUENCE [LARGE SCALE GENOMIC DNA]</scope>
    <source>
        <strain>cv. Columbia</strain>
    </source>
</reference>
<reference key="2">
    <citation type="journal article" date="2017" name="Plant J.">
        <title>Araport11: a complete reannotation of the Arabidopsis thaliana reference genome.</title>
        <authorList>
            <person name="Cheng C.Y."/>
            <person name="Krishnakumar V."/>
            <person name="Chan A.P."/>
            <person name="Thibaud-Nissen F."/>
            <person name="Schobel S."/>
            <person name="Town C.D."/>
        </authorList>
    </citation>
    <scope>GENOME REANNOTATION</scope>
    <source>
        <strain>cv. Columbia</strain>
    </source>
</reference>
<reference key="3">
    <citation type="submission" date="2002-03" db="EMBL/GenBank/DDBJ databases">
        <title>Full-length cDNA from Arabidopsis thaliana.</title>
        <authorList>
            <person name="Brover V.V."/>
            <person name="Troukhan M.E."/>
            <person name="Alexandrov N.A."/>
            <person name="Lu Y.-P."/>
            <person name="Flavell R.B."/>
            <person name="Feldmann K.A."/>
        </authorList>
    </citation>
    <scope>NUCLEOTIDE SEQUENCE [LARGE SCALE MRNA]</scope>
</reference>
<reference key="4">
    <citation type="journal article" date="2002" name="Science">
        <title>Functional annotation of a full-length Arabidopsis cDNA collection.</title>
        <authorList>
            <person name="Seki M."/>
            <person name="Narusaka M."/>
            <person name="Kamiya A."/>
            <person name="Ishida J."/>
            <person name="Satou M."/>
            <person name="Sakurai T."/>
            <person name="Nakajima M."/>
            <person name="Enju A."/>
            <person name="Akiyama K."/>
            <person name="Oono Y."/>
            <person name="Muramatsu M."/>
            <person name="Hayashizaki Y."/>
            <person name="Kawai J."/>
            <person name="Carninci P."/>
            <person name="Itoh M."/>
            <person name="Ishii Y."/>
            <person name="Arakawa T."/>
            <person name="Shibata K."/>
            <person name="Shinagawa A."/>
            <person name="Shinozaki K."/>
        </authorList>
    </citation>
    <scope>NUCLEOTIDE SEQUENCE [LARGE SCALE MRNA] OF 5-368</scope>
    <source>
        <strain>cv. Columbia</strain>
    </source>
</reference>
<organism>
    <name type="scientific">Arabidopsis thaliana</name>
    <name type="common">Mouse-ear cress</name>
    <dbReference type="NCBI Taxonomy" id="3702"/>
    <lineage>
        <taxon>Eukaryota</taxon>
        <taxon>Viridiplantae</taxon>
        <taxon>Streptophyta</taxon>
        <taxon>Embryophyta</taxon>
        <taxon>Tracheophyta</taxon>
        <taxon>Spermatophyta</taxon>
        <taxon>Magnoliopsida</taxon>
        <taxon>eudicotyledons</taxon>
        <taxon>Gunneridae</taxon>
        <taxon>Pentapetalae</taxon>
        <taxon>rosids</taxon>
        <taxon>malvids</taxon>
        <taxon>Brassicales</taxon>
        <taxon>Brassicaceae</taxon>
        <taxon>Camelineae</taxon>
        <taxon>Arabidopsis</taxon>
    </lineage>
</organism>
<protein>
    <recommendedName>
        <fullName>F-box protein At3g17710</fullName>
    </recommendedName>
</protein>
<accession>Q9LUM6</accession>
<accession>Q8GY92</accession>
<accession>Q8LA94</accession>
<comment type="sequence caution" evidence="2">
    <conflict type="erroneous initiation">
        <sequence resource="EMBL-CDS" id="BAC42430"/>
    </conflict>
</comment>